<sequence>MSRASSQQASPTSQTFDPSDLSTYTLDVLHHYPLVDLLQQLNAIPNDLKIPDTYSKVEQAARINVLRAICVGFAEVRRHNDNRTLQRSTMFAVNDAASRIRPSIGLKRTFPTGIFSTTIHGSPSDDDISTS</sequence>
<comment type="function">
    <text evidence="1">Participates in the assembly of the infectious particles by decorating the outer surface of the capsid shell and thus forming a layer between the capsid and the tegument. Complexes composed of the major capsid protein and small capsomere-interacting protein/SCP assemble together in the host cytoplasm and are translocated to the nucleus, where they accumulate and participate in capsid assembly.</text>
</comment>
<comment type="subunit">
    <text evidence="1">Interacts with the major capsid protein/MCP.</text>
</comment>
<comment type="subcellular location">
    <subcellularLocation>
        <location evidence="1">Virion</location>
    </subcellularLocation>
    <subcellularLocation>
        <location evidence="1">Host nucleus</location>
    </subcellularLocation>
</comment>
<comment type="similarity">
    <text evidence="1">Belongs to the herpesviridae small capsomere-interacting protein family.</text>
</comment>
<protein>
    <recommendedName>
        <fullName evidence="1">Small capsomere-interacting protein</fullName>
    </recommendedName>
</protein>
<dbReference type="EMBL" id="AF243438">
    <property type="protein sequence ID" value="AAG14228.1"/>
    <property type="molecule type" value="Genomic_DNA"/>
</dbReference>
<dbReference type="RefSeq" id="YP_001033964.1">
    <property type="nucleotide sequence ID" value="NC_002229.3"/>
</dbReference>
<dbReference type="GeneID" id="4811509"/>
<dbReference type="KEGG" id="vg:4811509"/>
<dbReference type="Proteomes" id="UP000008072">
    <property type="component" value="Segment"/>
</dbReference>
<dbReference type="GO" id="GO:0042025">
    <property type="term" value="C:host cell nucleus"/>
    <property type="evidence" value="ECO:0007669"/>
    <property type="project" value="UniProtKB-SubCell"/>
</dbReference>
<dbReference type="GO" id="GO:0019028">
    <property type="term" value="C:viral capsid"/>
    <property type="evidence" value="ECO:0007669"/>
    <property type="project" value="UniProtKB-UniRule"/>
</dbReference>
<dbReference type="GO" id="GO:0016032">
    <property type="term" value="P:viral process"/>
    <property type="evidence" value="ECO:0007669"/>
    <property type="project" value="UniProtKB-UniRule"/>
</dbReference>
<dbReference type="HAMAP" id="MF_04020">
    <property type="entry name" value="HSV_SCP_alphahv"/>
    <property type="match status" value="1"/>
</dbReference>
<dbReference type="InterPro" id="IPR007584">
    <property type="entry name" value="Herpes_UL35"/>
</dbReference>
<dbReference type="Pfam" id="PF04496">
    <property type="entry name" value="Herpes_UL35"/>
    <property type="match status" value="1"/>
</dbReference>
<organismHost>
    <name type="scientific">Gallus gallus</name>
    <name type="common">Chicken</name>
    <dbReference type="NCBI Taxonomy" id="9031"/>
</organismHost>
<reference key="1">
    <citation type="journal article" date="2000" name="J. Virol.">
        <title>The genome of a very virulent Marek's disease virus.</title>
        <authorList>
            <person name="Tulman E.R."/>
            <person name="Afonso C.L."/>
            <person name="Lu Z."/>
            <person name="Zsak L."/>
            <person name="Rock D.L."/>
            <person name="Kutish G.F."/>
        </authorList>
    </citation>
    <scope>NUCLEOTIDE SEQUENCE [LARGE SCALE GENOMIC DNA]</scope>
</reference>
<gene>
    <name evidence="1" type="primary">SCP</name>
    <name type="ordered locus">MDV048</name>
</gene>
<proteinExistence type="inferred from homology"/>
<keyword id="KW-0167">Capsid protein</keyword>
<keyword id="KW-1048">Host nucleus</keyword>
<keyword id="KW-1185">Reference proteome</keyword>
<keyword id="KW-0946">Virion</keyword>
<feature type="chain" id="PRO_0000406527" description="Small capsomere-interacting protein">
    <location>
        <begin position="1"/>
        <end position="131"/>
    </location>
</feature>
<evidence type="ECO:0000255" key="1">
    <source>
        <dbReference type="HAMAP-Rule" id="MF_04020"/>
    </source>
</evidence>
<accession>Q9E6N4</accession>
<organism>
    <name type="scientific">Gallid herpesvirus 2 (strain Chicken/Md5/ATCC VR-987)</name>
    <name type="common">GaHV-2</name>
    <name type="synonym">Marek's disease herpesvirus type 1</name>
    <dbReference type="NCBI Taxonomy" id="10389"/>
    <lineage>
        <taxon>Viruses</taxon>
        <taxon>Duplodnaviria</taxon>
        <taxon>Heunggongvirae</taxon>
        <taxon>Peploviricota</taxon>
        <taxon>Herviviricetes</taxon>
        <taxon>Herpesvirales</taxon>
        <taxon>Orthoherpesviridae</taxon>
        <taxon>Alphaherpesvirinae</taxon>
        <taxon>Mardivirus</taxon>
        <taxon>Mardivirus gallidalpha2</taxon>
        <taxon>Gallid alphaherpesvirus 2</taxon>
    </lineage>
</organism>
<name>SCP_GAHVM</name>